<protein>
    <recommendedName>
        <fullName evidence="2">Large ribosomal subunit protein uL5</fullName>
    </recommendedName>
    <alternativeName>
        <fullName>60S ribosomal protein L11</fullName>
    </alternativeName>
</protein>
<keyword id="KW-0963">Cytoplasm</keyword>
<keyword id="KW-0539">Nucleus</keyword>
<keyword id="KW-0687">Ribonucleoprotein</keyword>
<keyword id="KW-0689">Ribosomal protein</keyword>
<keyword id="KW-0694">RNA-binding</keyword>
<keyword id="KW-0699">rRNA-binding</keyword>
<name>RL11_CHLRE</name>
<reference key="1">
    <citation type="submission" date="1996-01" db="EMBL/GenBank/DDBJ databases">
        <authorList>
            <person name="Walter F."/>
        </authorList>
    </citation>
    <scope>NUCLEOTIDE SEQUENCE [MRNA]</scope>
    <source>
        <strain>7781</strain>
    </source>
</reference>
<gene>
    <name type="primary">RPL11</name>
</gene>
<organism>
    <name type="scientific">Chlamydomonas reinhardtii</name>
    <name type="common">Chlamydomonas smithii</name>
    <dbReference type="NCBI Taxonomy" id="3055"/>
    <lineage>
        <taxon>Eukaryota</taxon>
        <taxon>Viridiplantae</taxon>
        <taxon>Chlorophyta</taxon>
        <taxon>core chlorophytes</taxon>
        <taxon>Chlorophyceae</taxon>
        <taxon>CS clade</taxon>
        <taxon>Chlamydomonadales</taxon>
        <taxon>Chlamydomonadaceae</taxon>
        <taxon>Chlamydomonas</taxon>
    </lineage>
</organism>
<accession>P50881</accession>
<comment type="function">
    <text evidence="1">Component of the ribosome, a large ribonucleoprotein complex responsible for the synthesis of proteins in the cell. The small ribosomal subunit (SSU) binds messenger RNAs (mRNAs) and translates the encoded message by selecting cognate aminoacyl-transfer RNA (tRNA) molecules. The large subunit (LSU) contains the ribosomal catalytic site termed the peptidyl transferase center (PTC), which catalyzes the formation of peptide bonds, thereby polymerizing the amino acids delivered by tRNAs into a polypeptide chain. The nascent polypeptides leave the ribosome through a tunnel in the LSU and interact with protein factors that function in enzymatic processing, targeting, and the membrane insertion of nascent chains at the exit of the ribosomal tunnel.</text>
</comment>
<comment type="subunit">
    <text evidence="1">Component of the large ribosomal subunit.</text>
</comment>
<comment type="subcellular location">
    <subcellularLocation>
        <location evidence="1">Nucleus</location>
    </subcellularLocation>
    <subcellularLocation>
        <location evidence="1">Cytoplasm</location>
    </subcellularLocation>
</comment>
<comment type="similarity">
    <text evidence="2">Belongs to the universal ribosomal protein uL5 family.</text>
</comment>
<evidence type="ECO:0000250" key="1">
    <source>
        <dbReference type="UniProtKB" id="P0C0W9"/>
    </source>
</evidence>
<evidence type="ECO:0000305" key="2"/>
<sequence>MREIRISKLVLNIAVAESGDRLQKAAKVLEQLTSQVPVYGRARFTVRSFAIRRNEKISCYVTVRGEKAYDLVKRGLAVKEFELIRKNFSDTGNFGFGIQEHIDLGLKYDPSTGIYGMDFYVCLERRGYRVARRRKQKAHVGVKHKVTKEDAIKWFQQEFDGVVLNKAPAS</sequence>
<feature type="chain" id="PRO_0000125097" description="Large ribosomal subunit protein uL5">
    <location>
        <begin position="1"/>
        <end position="170"/>
    </location>
</feature>
<dbReference type="EMBL" id="X95313">
    <property type="protein sequence ID" value="CAA64625.1"/>
    <property type="molecule type" value="mRNA"/>
</dbReference>
<dbReference type="PIR" id="T08155">
    <property type="entry name" value="T08155"/>
</dbReference>
<dbReference type="SMR" id="P50881"/>
<dbReference type="PaxDb" id="3055-EDP09751"/>
<dbReference type="ProMEX" id="P50881"/>
<dbReference type="eggNOG" id="KOG0397">
    <property type="taxonomic scope" value="Eukaryota"/>
</dbReference>
<dbReference type="GO" id="GO:0005737">
    <property type="term" value="C:cytoplasm"/>
    <property type="evidence" value="ECO:0007669"/>
    <property type="project" value="UniProtKB-SubCell"/>
</dbReference>
<dbReference type="GO" id="GO:0005634">
    <property type="term" value="C:nucleus"/>
    <property type="evidence" value="ECO:0007669"/>
    <property type="project" value="UniProtKB-SubCell"/>
</dbReference>
<dbReference type="GO" id="GO:1990904">
    <property type="term" value="C:ribonucleoprotein complex"/>
    <property type="evidence" value="ECO:0007669"/>
    <property type="project" value="UniProtKB-KW"/>
</dbReference>
<dbReference type="GO" id="GO:0005840">
    <property type="term" value="C:ribosome"/>
    <property type="evidence" value="ECO:0007669"/>
    <property type="project" value="UniProtKB-KW"/>
</dbReference>
<dbReference type="GO" id="GO:0019843">
    <property type="term" value="F:rRNA binding"/>
    <property type="evidence" value="ECO:0007669"/>
    <property type="project" value="UniProtKB-KW"/>
</dbReference>
<dbReference type="GO" id="GO:0003735">
    <property type="term" value="F:structural constituent of ribosome"/>
    <property type="evidence" value="ECO:0007669"/>
    <property type="project" value="InterPro"/>
</dbReference>
<dbReference type="GO" id="GO:0006412">
    <property type="term" value="P:translation"/>
    <property type="evidence" value="ECO:0007669"/>
    <property type="project" value="InterPro"/>
</dbReference>
<dbReference type="FunFam" id="3.30.1440.10:FF:000004">
    <property type="entry name" value="60S ribosomal protein L11, putative"/>
    <property type="match status" value="1"/>
</dbReference>
<dbReference type="Gene3D" id="3.30.1440.10">
    <property type="match status" value="1"/>
</dbReference>
<dbReference type="InterPro" id="IPR002132">
    <property type="entry name" value="Ribosomal_uL5"/>
</dbReference>
<dbReference type="InterPro" id="IPR031309">
    <property type="entry name" value="Ribosomal_uL5_C"/>
</dbReference>
<dbReference type="InterPro" id="IPR022803">
    <property type="entry name" value="Ribosomal_uL5_dom_sf"/>
</dbReference>
<dbReference type="InterPro" id="IPR031310">
    <property type="entry name" value="Ribosomal_uL5_N"/>
</dbReference>
<dbReference type="NCBIfam" id="NF003258">
    <property type="entry name" value="PRK04219.1"/>
    <property type="match status" value="1"/>
</dbReference>
<dbReference type="PANTHER" id="PTHR11994">
    <property type="entry name" value="60S RIBOSOMAL PROTEIN L11-RELATED"/>
    <property type="match status" value="1"/>
</dbReference>
<dbReference type="Pfam" id="PF00281">
    <property type="entry name" value="Ribosomal_L5"/>
    <property type="match status" value="1"/>
</dbReference>
<dbReference type="Pfam" id="PF00673">
    <property type="entry name" value="Ribosomal_L5_C"/>
    <property type="match status" value="1"/>
</dbReference>
<dbReference type="PIRSF" id="PIRSF002161">
    <property type="entry name" value="Ribosomal_L5"/>
    <property type="match status" value="1"/>
</dbReference>
<dbReference type="SUPFAM" id="SSF55282">
    <property type="entry name" value="RL5-like"/>
    <property type="match status" value="1"/>
</dbReference>
<proteinExistence type="evidence at transcript level"/>